<protein>
    <recommendedName>
        <fullName>Cytochrome b</fullName>
    </recommendedName>
    <alternativeName>
        <fullName>Complex III subunit 3</fullName>
    </alternativeName>
    <alternativeName>
        <fullName>Complex III subunit III</fullName>
    </alternativeName>
    <alternativeName>
        <fullName>Cytochrome b-c1 complex subunit 3</fullName>
    </alternativeName>
    <alternativeName>
        <fullName>Ubiquinol-cytochrome-c reductase complex cytochrome b subunit</fullName>
    </alternativeName>
</protein>
<organism>
    <name type="scientific">Neocyttus rhomboidalis</name>
    <name type="common">Spiky oreo dory</name>
    <dbReference type="NCBI Taxonomy" id="181447"/>
    <lineage>
        <taxon>Eukaryota</taxon>
        <taxon>Metazoa</taxon>
        <taxon>Chordata</taxon>
        <taxon>Craniata</taxon>
        <taxon>Vertebrata</taxon>
        <taxon>Euteleostomi</taxon>
        <taxon>Actinopterygii</taxon>
        <taxon>Neopterygii</taxon>
        <taxon>Teleostei</taxon>
        <taxon>Neoteleostei</taxon>
        <taxon>Acanthomorphata</taxon>
        <taxon>Zeiogadaria</taxon>
        <taxon>Zeariae</taxon>
        <taxon>Zeiformes</taxon>
        <taxon>Oreosomatidae</taxon>
        <taxon>Neocyttus</taxon>
    </lineage>
</organism>
<accession>Q8HLB9</accession>
<proteinExistence type="inferred from homology"/>
<evidence type="ECO:0000250" key="1"/>
<evidence type="ECO:0000250" key="2">
    <source>
        <dbReference type="UniProtKB" id="P00157"/>
    </source>
</evidence>
<evidence type="ECO:0000255" key="3">
    <source>
        <dbReference type="PROSITE-ProRule" id="PRU00967"/>
    </source>
</evidence>
<evidence type="ECO:0000255" key="4">
    <source>
        <dbReference type="PROSITE-ProRule" id="PRU00968"/>
    </source>
</evidence>
<comment type="function">
    <text evidence="2">Component of the ubiquinol-cytochrome c reductase complex (complex III or cytochrome b-c1 complex) that is part of the mitochondrial respiratory chain. The b-c1 complex mediates electron transfer from ubiquinol to cytochrome c. Contributes to the generation of a proton gradient across the mitochondrial membrane that is then used for ATP synthesis.</text>
</comment>
<comment type="cofactor">
    <cofactor evidence="2">
        <name>heme b</name>
        <dbReference type="ChEBI" id="CHEBI:60344"/>
    </cofactor>
    <text evidence="2">Binds 2 heme b groups non-covalently.</text>
</comment>
<comment type="subunit">
    <text evidence="2">The cytochrome bc1 complex contains 3 respiratory subunits (MT-CYB, CYC1 and UQCRFS1), 2 core proteins (UQCRC1 and UQCRC2) and probably 6 low-molecular weight proteins.</text>
</comment>
<comment type="subcellular location">
    <subcellularLocation>
        <location evidence="2">Mitochondrion inner membrane</location>
        <topology evidence="2">Multi-pass membrane protein</topology>
    </subcellularLocation>
</comment>
<comment type="miscellaneous">
    <text evidence="1">Heme 1 (or BL or b562) is low-potential and absorbs at about 562 nm, and heme 2 (or BH or b566) is high-potential and absorbs at about 566 nm.</text>
</comment>
<comment type="similarity">
    <text evidence="3 4">Belongs to the cytochrome b family.</text>
</comment>
<comment type="caution">
    <text evidence="2">The full-length protein contains only eight transmembrane helices, not nine as predicted by bioinformatics tools.</text>
</comment>
<name>CYB_NEORH</name>
<geneLocation type="mitochondrion"/>
<keyword id="KW-0249">Electron transport</keyword>
<keyword id="KW-0349">Heme</keyword>
<keyword id="KW-0408">Iron</keyword>
<keyword id="KW-0472">Membrane</keyword>
<keyword id="KW-0479">Metal-binding</keyword>
<keyword id="KW-0496">Mitochondrion</keyword>
<keyword id="KW-0999">Mitochondrion inner membrane</keyword>
<keyword id="KW-0679">Respiratory chain</keyword>
<keyword id="KW-0812">Transmembrane</keyword>
<keyword id="KW-1133">Transmembrane helix</keyword>
<keyword id="KW-0813">Transport</keyword>
<keyword id="KW-0830">Ubiquinone</keyword>
<feature type="chain" id="PRO_0000061273" description="Cytochrome b">
    <location>
        <begin position="1"/>
        <end position="380"/>
    </location>
</feature>
<feature type="transmembrane region" description="Helical" evidence="2">
    <location>
        <begin position="33"/>
        <end position="53"/>
    </location>
</feature>
<feature type="transmembrane region" description="Helical" evidence="2">
    <location>
        <begin position="77"/>
        <end position="98"/>
    </location>
</feature>
<feature type="transmembrane region" description="Helical" evidence="2">
    <location>
        <begin position="113"/>
        <end position="133"/>
    </location>
</feature>
<feature type="transmembrane region" description="Helical" evidence="2">
    <location>
        <begin position="178"/>
        <end position="198"/>
    </location>
</feature>
<feature type="transmembrane region" description="Helical" evidence="2">
    <location>
        <begin position="226"/>
        <end position="246"/>
    </location>
</feature>
<feature type="transmembrane region" description="Helical" evidence="2">
    <location>
        <begin position="288"/>
        <end position="308"/>
    </location>
</feature>
<feature type="transmembrane region" description="Helical" evidence="2">
    <location>
        <begin position="320"/>
        <end position="340"/>
    </location>
</feature>
<feature type="transmembrane region" description="Helical" evidence="2">
    <location>
        <begin position="347"/>
        <end position="367"/>
    </location>
</feature>
<feature type="binding site" description="axial binding residue" evidence="2">
    <location>
        <position position="83"/>
    </location>
    <ligand>
        <name>heme b</name>
        <dbReference type="ChEBI" id="CHEBI:60344"/>
        <label>b562</label>
    </ligand>
    <ligandPart>
        <name>Fe</name>
        <dbReference type="ChEBI" id="CHEBI:18248"/>
    </ligandPart>
</feature>
<feature type="binding site" description="axial binding residue" evidence="2">
    <location>
        <position position="97"/>
    </location>
    <ligand>
        <name>heme b</name>
        <dbReference type="ChEBI" id="CHEBI:60344"/>
        <label>b566</label>
    </ligand>
    <ligandPart>
        <name>Fe</name>
        <dbReference type="ChEBI" id="CHEBI:18248"/>
    </ligandPart>
</feature>
<feature type="binding site" description="axial binding residue" evidence="2">
    <location>
        <position position="182"/>
    </location>
    <ligand>
        <name>heme b</name>
        <dbReference type="ChEBI" id="CHEBI:60344"/>
        <label>b562</label>
    </ligand>
    <ligandPart>
        <name>Fe</name>
        <dbReference type="ChEBI" id="CHEBI:18248"/>
    </ligandPart>
</feature>
<feature type="binding site" description="axial binding residue" evidence="2">
    <location>
        <position position="196"/>
    </location>
    <ligand>
        <name>heme b</name>
        <dbReference type="ChEBI" id="CHEBI:60344"/>
        <label>b566</label>
    </ligand>
    <ligandPart>
        <name>Fe</name>
        <dbReference type="ChEBI" id="CHEBI:18248"/>
    </ligandPart>
</feature>
<feature type="binding site" evidence="2">
    <location>
        <position position="201"/>
    </location>
    <ligand>
        <name>a ubiquinone</name>
        <dbReference type="ChEBI" id="CHEBI:16389"/>
    </ligand>
</feature>
<dbReference type="EMBL" id="AP004436">
    <property type="protein sequence ID" value="BAC23579.1"/>
    <property type="molecule type" value="Genomic_DNA"/>
</dbReference>
<dbReference type="RefSeq" id="NP_739983.1">
    <property type="nucleotide sequence ID" value="NC_004399.1"/>
</dbReference>
<dbReference type="SMR" id="Q8HLB9"/>
<dbReference type="GeneID" id="805945"/>
<dbReference type="CTD" id="4519"/>
<dbReference type="GO" id="GO:0005743">
    <property type="term" value="C:mitochondrial inner membrane"/>
    <property type="evidence" value="ECO:0007669"/>
    <property type="project" value="UniProtKB-SubCell"/>
</dbReference>
<dbReference type="GO" id="GO:0045275">
    <property type="term" value="C:respiratory chain complex III"/>
    <property type="evidence" value="ECO:0007669"/>
    <property type="project" value="InterPro"/>
</dbReference>
<dbReference type="GO" id="GO:0046872">
    <property type="term" value="F:metal ion binding"/>
    <property type="evidence" value="ECO:0007669"/>
    <property type="project" value="UniProtKB-KW"/>
</dbReference>
<dbReference type="GO" id="GO:0008121">
    <property type="term" value="F:ubiquinol-cytochrome-c reductase activity"/>
    <property type="evidence" value="ECO:0007669"/>
    <property type="project" value="InterPro"/>
</dbReference>
<dbReference type="GO" id="GO:0006122">
    <property type="term" value="P:mitochondrial electron transport, ubiquinol to cytochrome c"/>
    <property type="evidence" value="ECO:0007669"/>
    <property type="project" value="TreeGrafter"/>
</dbReference>
<dbReference type="CDD" id="cd00290">
    <property type="entry name" value="cytochrome_b_C"/>
    <property type="match status" value="1"/>
</dbReference>
<dbReference type="CDD" id="cd00284">
    <property type="entry name" value="Cytochrome_b_N"/>
    <property type="match status" value="1"/>
</dbReference>
<dbReference type="FunFam" id="1.20.810.10:FF:000002">
    <property type="entry name" value="Cytochrome b"/>
    <property type="match status" value="1"/>
</dbReference>
<dbReference type="Gene3D" id="1.20.810.10">
    <property type="entry name" value="Cytochrome Bc1 Complex, Chain C"/>
    <property type="match status" value="1"/>
</dbReference>
<dbReference type="InterPro" id="IPR005798">
    <property type="entry name" value="Cyt_b/b6_C"/>
</dbReference>
<dbReference type="InterPro" id="IPR036150">
    <property type="entry name" value="Cyt_b/b6_C_sf"/>
</dbReference>
<dbReference type="InterPro" id="IPR005797">
    <property type="entry name" value="Cyt_b/b6_N"/>
</dbReference>
<dbReference type="InterPro" id="IPR027387">
    <property type="entry name" value="Cytb/b6-like_sf"/>
</dbReference>
<dbReference type="InterPro" id="IPR030689">
    <property type="entry name" value="Cytochrome_b"/>
</dbReference>
<dbReference type="InterPro" id="IPR048260">
    <property type="entry name" value="Cytochrome_b_C_euk/bac"/>
</dbReference>
<dbReference type="InterPro" id="IPR048259">
    <property type="entry name" value="Cytochrome_b_N_euk/bac"/>
</dbReference>
<dbReference type="InterPro" id="IPR016174">
    <property type="entry name" value="Di-haem_cyt_TM"/>
</dbReference>
<dbReference type="PANTHER" id="PTHR19271">
    <property type="entry name" value="CYTOCHROME B"/>
    <property type="match status" value="1"/>
</dbReference>
<dbReference type="PANTHER" id="PTHR19271:SF16">
    <property type="entry name" value="CYTOCHROME B"/>
    <property type="match status" value="1"/>
</dbReference>
<dbReference type="Pfam" id="PF00032">
    <property type="entry name" value="Cytochrom_B_C"/>
    <property type="match status" value="1"/>
</dbReference>
<dbReference type="Pfam" id="PF00033">
    <property type="entry name" value="Cytochrome_B"/>
    <property type="match status" value="1"/>
</dbReference>
<dbReference type="PIRSF" id="PIRSF038885">
    <property type="entry name" value="COB"/>
    <property type="match status" value="1"/>
</dbReference>
<dbReference type="SUPFAM" id="SSF81648">
    <property type="entry name" value="a domain/subunit of cytochrome bc1 complex (Ubiquinol-cytochrome c reductase)"/>
    <property type="match status" value="1"/>
</dbReference>
<dbReference type="SUPFAM" id="SSF81342">
    <property type="entry name" value="Transmembrane di-heme cytochromes"/>
    <property type="match status" value="1"/>
</dbReference>
<dbReference type="PROSITE" id="PS51003">
    <property type="entry name" value="CYTB_CTER"/>
    <property type="match status" value="1"/>
</dbReference>
<dbReference type="PROSITE" id="PS51002">
    <property type="entry name" value="CYTB_NTER"/>
    <property type="match status" value="1"/>
</dbReference>
<gene>
    <name type="primary">mt-cyb</name>
    <name type="synonym">cob</name>
    <name type="synonym">cytb</name>
    <name type="synonym">mtcyb</name>
</gene>
<sequence length="380" mass="42493">MASLRKTHPLLKIVNDALVDLPTPINISTWWNFGSLLGLCLIAQILTGLFLAMHYTADIATAFSSVAHICRDVNYGWLIRNFHANGASFFFICLYLHVGRGLYYGSYLYKETWNIGVVLLLLVMMTAFVGYVLPWGQMSFWGATVITNLLSAVPYVGNTLVQWIWGGFSVDNATLTRFFAFHFLFPFIIAAMVILHLLFLHETGSSNPTGISSNADKIPFHPYFTYKDLFGFVILLLALSVLALFSPNLLGDPDNFIPANPLVTPPHIKPEWYFLFAYAILRSIPNKLGGVLALLASILILMVVPLLHTSKQRGLMFRPLTQILFWTLVADVAILTWIGGMPVEHPFITVGQVASVLYFALFLIFIPATGWAENKALKWN</sequence>
<reference key="1">
    <citation type="journal article" date="2003" name="Mol. Phylogenet. Evol.">
        <title>Major patterns of higher teleostean phylogenies: a new perspective based on 100 complete mitochondrial DNA sequences.</title>
        <authorList>
            <person name="Miya M."/>
            <person name="Takeshima H."/>
            <person name="Endo H."/>
            <person name="Ishiguro N.B."/>
            <person name="Inoue J.G."/>
            <person name="Mukai T."/>
            <person name="Satoh T.P."/>
            <person name="Yamaguchi M."/>
            <person name="Kawaguchi A."/>
            <person name="Mabuchi K."/>
            <person name="Shirai S.M."/>
            <person name="Nishida M."/>
        </authorList>
    </citation>
    <scope>NUCLEOTIDE SEQUENCE [GENOMIC DNA]</scope>
</reference>